<reference key="1">
    <citation type="journal article" date="2006" name="Hum. Mol. Genet.">
        <title>Origination and evolution of a human-specific transmembrane protein gene, c1orf37-dup.</title>
        <authorList>
            <person name="Yu H."/>
            <person name="Jiang H."/>
            <person name="Zhou Q."/>
            <person name="Yang J."/>
            <person name="Cun Y."/>
            <person name="Su B."/>
            <person name="Xiao C."/>
            <person name="Wang W."/>
        </authorList>
    </citation>
    <scope>NUCLEOTIDE SEQUENCE [GENOMIC DNA]</scope>
    <scope>VARIANT VAL-193</scope>
    <scope>TISSUE SPECIFICITY</scope>
</reference>
<keyword id="KW-0472">Membrane</keyword>
<keyword id="KW-1185">Reference proteome</keyword>
<keyword id="KW-0812">Transmembrane</keyword>
<keyword id="KW-1133">Transmembrane helix</keyword>
<organism>
    <name type="scientific">Homo sapiens</name>
    <name type="common">Human</name>
    <dbReference type="NCBI Taxonomy" id="9606"/>
    <lineage>
        <taxon>Eukaryota</taxon>
        <taxon>Metazoa</taxon>
        <taxon>Chordata</taxon>
        <taxon>Craniata</taxon>
        <taxon>Vertebrata</taxon>
        <taxon>Euteleostomi</taxon>
        <taxon>Mammalia</taxon>
        <taxon>Eutheria</taxon>
        <taxon>Euarchontoglires</taxon>
        <taxon>Primates</taxon>
        <taxon>Haplorrhini</taxon>
        <taxon>Catarrhini</taxon>
        <taxon>Hominidae</taxon>
        <taxon>Homo</taxon>
    </lineage>
</organism>
<sequence length="376" mass="42940">MARGPGPLGRPRPDTVAMPKRGKRLKFRAHDACSGRVTVADYADSDLAVVRSGRVKKAVANAVRQEVKSLCGLEASQVPAEEALSGAGEPYDIIDSSDEMDAQEENIHERTVSRKKKSKRHKEELDGAGGEEYPMDIWLLLASYIRPEDIVNFSLICKNAWTVTCTAAFWTRLYRRHYTLDASLPLRLRPESMEKLHCLRACVIRSLYHMYEPFAARISKNPAIPESTPSTLKNSKCLLFWCRKIVGNRQEPMWEFNFKFKKQSPRLKSKCTGGLQPPVQYEDVHTNPDQDCCLLQVTTLNFIFIPIVMGMIFTLFTINVSTDMRHHRVRLVFQDSPVHGGRKLRSEQGVQVILDPVHSVRLFDWWHPQYPFSLRA</sequence>
<feature type="chain" id="PRO_0000278796" description="Putative transmembrane protein 183BP">
    <location>
        <begin position="1"/>
        <end position="376"/>
    </location>
</feature>
<feature type="transmembrane region" description="Helical" evidence="1">
    <location>
        <begin position="300"/>
        <end position="320"/>
    </location>
</feature>
<feature type="region of interest" description="Disordered" evidence="2">
    <location>
        <begin position="1"/>
        <end position="20"/>
    </location>
</feature>
<feature type="region of interest" description="Disordered" evidence="2">
    <location>
        <begin position="102"/>
        <end position="127"/>
    </location>
</feature>
<feature type="sequence variant" id="VAR_030867" description="In dbSNP:rs7630407." evidence="3">
    <original>M</original>
    <variation>V</variation>
    <location>
        <position position="193"/>
    </location>
</feature>
<dbReference type="EMBL" id="DQ186292">
    <property type="protein sequence ID" value="ABA18877.1"/>
    <property type="molecule type" value="Genomic_DNA"/>
</dbReference>
<dbReference type="EMBL" id="DQ186293">
    <property type="protein sequence ID" value="ABA18878.1"/>
    <property type="molecule type" value="Genomic_DNA"/>
</dbReference>
<dbReference type="EMBL" id="DQ186294">
    <property type="protein sequence ID" value="ABA18879.1"/>
    <property type="molecule type" value="Genomic_DNA"/>
</dbReference>
<dbReference type="EMBL" id="DQ186295">
    <property type="protein sequence ID" value="ABA18880.1"/>
    <property type="molecule type" value="Genomic_DNA"/>
</dbReference>
<dbReference type="EMBL" id="DQ186296">
    <property type="protein sequence ID" value="ABA18881.1"/>
    <property type="molecule type" value="Genomic_DNA"/>
</dbReference>
<dbReference type="EMBL" id="DQ186297">
    <property type="protein sequence ID" value="ABA18882.1"/>
    <property type="molecule type" value="Genomic_DNA"/>
</dbReference>
<dbReference type="EMBL" id="DQ186298">
    <property type="protein sequence ID" value="ABA18883.1"/>
    <property type="molecule type" value="Genomic_DNA"/>
</dbReference>
<dbReference type="EMBL" id="DQ186299">
    <property type="protein sequence ID" value="ABA18884.1"/>
    <property type="molecule type" value="Genomic_DNA"/>
</dbReference>
<dbReference type="EMBL" id="DQ186300">
    <property type="protein sequence ID" value="ABA18885.1"/>
    <property type="molecule type" value="Genomic_DNA"/>
</dbReference>
<dbReference type="EMBL" id="DQ186301">
    <property type="protein sequence ID" value="ABA18886.1"/>
    <property type="molecule type" value="Genomic_DNA"/>
</dbReference>
<dbReference type="EMBL" id="DQ186302">
    <property type="protein sequence ID" value="ABA18887.1"/>
    <property type="molecule type" value="Genomic_DNA"/>
</dbReference>
<dbReference type="EMBL" id="DQ186303">
    <property type="protein sequence ID" value="ABA18888.1"/>
    <property type="molecule type" value="Genomic_DNA"/>
</dbReference>
<dbReference type="EMBL" id="DQ186304">
    <property type="protein sequence ID" value="ABA18889.1"/>
    <property type="molecule type" value="Genomic_DNA"/>
</dbReference>
<dbReference type="EMBL" id="DQ186305">
    <property type="protein sequence ID" value="ABA18890.1"/>
    <property type="molecule type" value="Genomic_DNA"/>
</dbReference>
<dbReference type="EMBL" id="DQ186306">
    <property type="protein sequence ID" value="ABA18891.1"/>
    <property type="molecule type" value="Genomic_DNA"/>
</dbReference>
<dbReference type="EMBL" id="DQ186307">
    <property type="protein sequence ID" value="ABA18892.1"/>
    <property type="molecule type" value="Genomic_DNA"/>
</dbReference>
<dbReference type="EMBL" id="DQ186308">
    <property type="protein sequence ID" value="ABA18893.1"/>
    <property type="molecule type" value="Genomic_DNA"/>
</dbReference>
<dbReference type="EMBL" id="DQ186309">
    <property type="protein sequence ID" value="ABA18894.1"/>
    <property type="molecule type" value="Genomic_DNA"/>
</dbReference>
<dbReference type="EMBL" id="DQ186310">
    <property type="protein sequence ID" value="ABA18895.1"/>
    <property type="molecule type" value="Genomic_DNA"/>
</dbReference>
<dbReference type="EMBL" id="DQ186311">
    <property type="protein sequence ID" value="ABA18896.1"/>
    <property type="molecule type" value="Genomic_DNA"/>
</dbReference>
<dbReference type="EMBL" id="DQ186312">
    <property type="protein sequence ID" value="ABA18897.1"/>
    <property type="molecule type" value="Genomic_DNA"/>
</dbReference>
<dbReference type="EMBL" id="DQ186313">
    <property type="protein sequence ID" value="ABA18898.1"/>
    <property type="molecule type" value="Genomic_DNA"/>
</dbReference>
<dbReference type="EMBL" id="DQ186314">
    <property type="protein sequence ID" value="ABA18899.1"/>
    <property type="molecule type" value="Genomic_DNA"/>
</dbReference>
<dbReference type="EMBL" id="DQ186315">
    <property type="protein sequence ID" value="ABA18900.1"/>
    <property type="molecule type" value="Genomic_DNA"/>
</dbReference>
<dbReference type="EMBL" id="DQ186316">
    <property type="protein sequence ID" value="ABA18901.1"/>
    <property type="molecule type" value="Genomic_DNA"/>
</dbReference>
<dbReference type="EMBL" id="DQ186317">
    <property type="protein sequence ID" value="ABA18902.1"/>
    <property type="molecule type" value="Genomic_DNA"/>
</dbReference>
<dbReference type="EMBL" id="DQ186318">
    <property type="protein sequence ID" value="ABA18903.1"/>
    <property type="molecule type" value="Genomic_DNA"/>
</dbReference>
<dbReference type="EMBL" id="DQ186319">
    <property type="protein sequence ID" value="ABA18904.1"/>
    <property type="molecule type" value="Genomic_DNA"/>
</dbReference>
<dbReference type="EMBL" id="DQ186320">
    <property type="protein sequence ID" value="ABA18905.1"/>
    <property type="molecule type" value="Genomic_DNA"/>
</dbReference>
<dbReference type="EMBL" id="DQ186321">
    <property type="protein sequence ID" value="ABA18906.1"/>
    <property type="molecule type" value="Genomic_DNA"/>
</dbReference>
<dbReference type="EMBL" id="DQ186322">
    <property type="protein sequence ID" value="ABA18907.1"/>
    <property type="molecule type" value="Genomic_DNA"/>
</dbReference>
<dbReference type="EMBL" id="DQ186323">
    <property type="protein sequence ID" value="ABA18908.1"/>
    <property type="molecule type" value="Genomic_DNA"/>
</dbReference>
<dbReference type="EMBL" id="DQ186324">
    <property type="protein sequence ID" value="ABA18909.1"/>
    <property type="molecule type" value="Genomic_DNA"/>
</dbReference>
<dbReference type="EMBL" id="DQ186325">
    <property type="protein sequence ID" value="ABA18910.1"/>
    <property type="molecule type" value="Genomic_DNA"/>
</dbReference>
<dbReference type="EMBL" id="DQ186326">
    <property type="protein sequence ID" value="ABA18911.1"/>
    <property type="molecule type" value="Genomic_DNA"/>
</dbReference>
<dbReference type="EMBL" id="DQ186327">
    <property type="protein sequence ID" value="ABA18912.1"/>
    <property type="molecule type" value="Genomic_DNA"/>
</dbReference>
<dbReference type="EMBL" id="DQ186328">
    <property type="protein sequence ID" value="ABA18913.1"/>
    <property type="molecule type" value="Genomic_DNA"/>
</dbReference>
<dbReference type="EMBL" id="DQ186329">
    <property type="protein sequence ID" value="ABA18914.1"/>
    <property type="molecule type" value="Genomic_DNA"/>
</dbReference>
<dbReference type="EMBL" id="DQ186330">
    <property type="protein sequence ID" value="ABA18915.1"/>
    <property type="molecule type" value="Genomic_DNA"/>
</dbReference>
<dbReference type="EMBL" id="DQ186331">
    <property type="protein sequence ID" value="ABA18916.1"/>
    <property type="molecule type" value="Genomic_DNA"/>
</dbReference>
<dbReference type="EMBL" id="DQ186332">
    <property type="protein sequence ID" value="ABA18917.1"/>
    <property type="molecule type" value="Genomic_DNA"/>
</dbReference>
<dbReference type="EMBL" id="DQ186333">
    <property type="protein sequence ID" value="ABA18918.1"/>
    <property type="molecule type" value="Genomic_DNA"/>
</dbReference>
<dbReference type="EMBL" id="DQ186334">
    <property type="protein sequence ID" value="ABA18919.1"/>
    <property type="molecule type" value="Genomic_DNA"/>
</dbReference>
<dbReference type="EMBL" id="DQ186335">
    <property type="protein sequence ID" value="ABA18920.1"/>
    <property type="molecule type" value="Genomic_DNA"/>
</dbReference>
<dbReference type="EMBL" id="DQ186336">
    <property type="protein sequence ID" value="ABA18921.1"/>
    <property type="molecule type" value="Genomic_DNA"/>
</dbReference>
<dbReference type="EMBL" id="DQ186337">
    <property type="protein sequence ID" value="ABA18922.1"/>
    <property type="molecule type" value="Genomic_DNA"/>
</dbReference>
<dbReference type="EMBL" id="DQ186338">
    <property type="protein sequence ID" value="ABA18923.1"/>
    <property type="molecule type" value="Genomic_DNA"/>
</dbReference>
<dbReference type="EMBL" id="DQ186339">
    <property type="protein sequence ID" value="ABA18924.1"/>
    <property type="molecule type" value="Genomic_DNA"/>
</dbReference>
<dbReference type="EMBL" id="DQ186340">
    <property type="protein sequence ID" value="ABA18925.1"/>
    <property type="molecule type" value="Genomic_DNA"/>
</dbReference>
<dbReference type="EMBL" id="DQ186341">
    <property type="protein sequence ID" value="ABA18926.1"/>
    <property type="molecule type" value="Genomic_DNA"/>
</dbReference>
<dbReference type="EMBL" id="DQ186342">
    <property type="protein sequence ID" value="ABA18927.1"/>
    <property type="molecule type" value="Genomic_DNA"/>
</dbReference>
<dbReference type="EMBL" id="DQ186343">
    <property type="protein sequence ID" value="ABA18928.1"/>
    <property type="molecule type" value="Genomic_DNA"/>
</dbReference>
<dbReference type="EMBL" id="DQ186344">
    <property type="protein sequence ID" value="ABA18929.1"/>
    <property type="molecule type" value="Genomic_DNA"/>
</dbReference>
<dbReference type="EMBL" id="DQ186345">
    <property type="protein sequence ID" value="ABA18930.1"/>
    <property type="molecule type" value="Genomic_DNA"/>
</dbReference>
<dbReference type="EMBL" id="DQ186346">
    <property type="protein sequence ID" value="ABA18931.1"/>
    <property type="molecule type" value="Genomic_DNA"/>
</dbReference>
<dbReference type="EMBL" id="DQ186347">
    <property type="protein sequence ID" value="ABA18932.1"/>
    <property type="molecule type" value="Genomic_DNA"/>
</dbReference>
<dbReference type="EMBL" id="DQ186348">
    <property type="protein sequence ID" value="ABA18933.1"/>
    <property type="molecule type" value="Genomic_DNA"/>
</dbReference>
<dbReference type="EMBL" id="DQ186349">
    <property type="protein sequence ID" value="ABA18934.1"/>
    <property type="molecule type" value="Genomic_DNA"/>
</dbReference>
<dbReference type="EMBL" id="DQ186350">
    <property type="protein sequence ID" value="ABA18935.1"/>
    <property type="molecule type" value="Genomic_DNA"/>
</dbReference>
<dbReference type="EMBL" id="DQ186351">
    <property type="protein sequence ID" value="ABA18936.1"/>
    <property type="molecule type" value="Genomic_DNA"/>
</dbReference>
<dbReference type="EMBL" id="DQ186352">
    <property type="protein sequence ID" value="ABA18937.1"/>
    <property type="molecule type" value="Genomic_DNA"/>
</dbReference>
<dbReference type="EMBL" id="DQ186353">
    <property type="protein sequence ID" value="ABA18938.1"/>
    <property type="molecule type" value="Genomic_DNA"/>
</dbReference>
<dbReference type="EMBL" id="DQ186354">
    <property type="protein sequence ID" value="ABA18939.1"/>
    <property type="molecule type" value="Genomic_DNA"/>
</dbReference>
<dbReference type="EMBL" id="DQ186355">
    <property type="protein sequence ID" value="ABA18940.1"/>
    <property type="molecule type" value="Genomic_DNA"/>
</dbReference>
<dbReference type="EMBL" id="DQ186356">
    <property type="protein sequence ID" value="ABA18941.1"/>
    <property type="molecule type" value="Genomic_DNA"/>
</dbReference>
<dbReference type="EMBL" id="DQ186357">
    <property type="protein sequence ID" value="ABA18942.1"/>
    <property type="molecule type" value="Genomic_DNA"/>
</dbReference>
<dbReference type="EMBL" id="DQ186358">
    <property type="protein sequence ID" value="ABA18943.1"/>
    <property type="molecule type" value="Genomic_DNA"/>
</dbReference>
<dbReference type="EMBL" id="DQ186359">
    <property type="protein sequence ID" value="ABA18944.1"/>
    <property type="molecule type" value="Genomic_DNA"/>
</dbReference>
<dbReference type="EMBL" id="DQ186360">
    <property type="protein sequence ID" value="ABA18945.1"/>
    <property type="molecule type" value="Genomic_DNA"/>
</dbReference>
<dbReference type="EMBL" id="DQ186361">
    <property type="protein sequence ID" value="ABA18946.1"/>
    <property type="molecule type" value="Genomic_DNA"/>
</dbReference>
<dbReference type="EMBL" id="DQ186362">
    <property type="protein sequence ID" value="ABA18947.1"/>
    <property type="molecule type" value="Genomic_DNA"/>
</dbReference>
<dbReference type="EMBL" id="DQ186363">
    <property type="protein sequence ID" value="ABA18948.1"/>
    <property type="molecule type" value="Genomic_DNA"/>
</dbReference>
<dbReference type="EMBL" id="DQ186364">
    <property type="protein sequence ID" value="ABA18949.1"/>
    <property type="molecule type" value="Genomic_DNA"/>
</dbReference>
<dbReference type="EMBL" id="DQ186365">
    <property type="protein sequence ID" value="ABA18950.1"/>
    <property type="molecule type" value="Genomic_DNA"/>
</dbReference>
<dbReference type="EMBL" id="DQ186366">
    <property type="protein sequence ID" value="ABA18951.1"/>
    <property type="molecule type" value="Genomic_DNA"/>
</dbReference>
<dbReference type="EMBL" id="DQ186367">
    <property type="protein sequence ID" value="ABA18952.1"/>
    <property type="molecule type" value="Genomic_DNA"/>
</dbReference>
<dbReference type="EMBL" id="DQ186368">
    <property type="protein sequence ID" value="ABA18953.1"/>
    <property type="molecule type" value="Genomic_DNA"/>
</dbReference>
<dbReference type="EMBL" id="DQ186369">
    <property type="protein sequence ID" value="ABA18954.1"/>
    <property type="molecule type" value="Genomic_DNA"/>
</dbReference>
<dbReference type="EMBL" id="DQ186370">
    <property type="protein sequence ID" value="ABA18955.1"/>
    <property type="molecule type" value="Genomic_DNA"/>
</dbReference>
<dbReference type="EMBL" id="DQ186371">
    <property type="protein sequence ID" value="ABA18956.1"/>
    <property type="molecule type" value="Genomic_DNA"/>
</dbReference>
<dbReference type="EMBL" id="DQ186372">
    <property type="protein sequence ID" value="ABA18957.1"/>
    <property type="molecule type" value="Genomic_DNA"/>
</dbReference>
<dbReference type="EMBL" id="DQ186373">
    <property type="protein sequence ID" value="ABA18958.1"/>
    <property type="molecule type" value="Genomic_DNA"/>
</dbReference>
<dbReference type="EMBL" id="DQ186374">
    <property type="protein sequence ID" value="ABA18959.1"/>
    <property type="molecule type" value="Genomic_DNA"/>
</dbReference>
<dbReference type="EMBL" id="DQ186375">
    <property type="protein sequence ID" value="ABA18960.1"/>
    <property type="molecule type" value="Genomic_DNA"/>
</dbReference>
<dbReference type="EMBL" id="DQ186376">
    <property type="protein sequence ID" value="ABA18961.1"/>
    <property type="molecule type" value="Genomic_DNA"/>
</dbReference>
<dbReference type="EMBL" id="DQ186377">
    <property type="protein sequence ID" value="ABA18962.1"/>
    <property type="molecule type" value="Genomic_DNA"/>
</dbReference>
<dbReference type="EMBL" id="DQ186378">
    <property type="protein sequence ID" value="ABA18963.1"/>
    <property type="molecule type" value="Genomic_DNA"/>
</dbReference>
<dbReference type="EMBL" id="DQ186379">
    <property type="protein sequence ID" value="ABA18964.1"/>
    <property type="molecule type" value="Genomic_DNA"/>
</dbReference>
<dbReference type="EMBL" id="DQ186380">
    <property type="protein sequence ID" value="ABA18965.1"/>
    <property type="molecule type" value="Genomic_DNA"/>
</dbReference>
<dbReference type="EMBL" id="DQ186381">
    <property type="protein sequence ID" value="ABA18966.1"/>
    <property type="molecule type" value="Genomic_DNA"/>
</dbReference>
<dbReference type="EMBL" id="DQ186382">
    <property type="protein sequence ID" value="ABA18967.1"/>
    <property type="molecule type" value="Genomic_DNA"/>
</dbReference>
<dbReference type="EMBL" id="DQ186383">
    <property type="protein sequence ID" value="ABA18968.1"/>
    <property type="molecule type" value="Genomic_DNA"/>
</dbReference>
<dbReference type="EMBL" id="DQ186384">
    <property type="protein sequence ID" value="ABA18969.1"/>
    <property type="molecule type" value="Genomic_DNA"/>
</dbReference>
<dbReference type="EMBL" id="DQ186385">
    <property type="protein sequence ID" value="ABA18970.1"/>
    <property type="molecule type" value="Genomic_DNA"/>
</dbReference>
<dbReference type="EMBL" id="DQ186386">
    <property type="protein sequence ID" value="ABA18971.1"/>
    <property type="molecule type" value="Genomic_DNA"/>
</dbReference>
<dbReference type="EMBL" id="DQ186387">
    <property type="protein sequence ID" value="ABA18972.1"/>
    <property type="molecule type" value="Genomic_DNA"/>
</dbReference>
<dbReference type="EMBL" id="DQ186388">
    <property type="protein sequence ID" value="ABA18973.1"/>
    <property type="molecule type" value="Genomic_DNA"/>
</dbReference>
<dbReference type="EMBL" id="DQ186389">
    <property type="protein sequence ID" value="ABA18974.1"/>
    <property type="molecule type" value="Genomic_DNA"/>
</dbReference>
<dbReference type="EMBL" id="DQ186390">
    <property type="protein sequence ID" value="ABA18975.1"/>
    <property type="molecule type" value="Genomic_DNA"/>
</dbReference>
<dbReference type="EMBL" id="DQ186391">
    <property type="protein sequence ID" value="ABA18976.1"/>
    <property type="molecule type" value="Genomic_DNA"/>
</dbReference>
<dbReference type="EMBL" id="DQ186392">
    <property type="protein sequence ID" value="ABA18977.1"/>
    <property type="molecule type" value="Genomic_DNA"/>
</dbReference>
<dbReference type="EMBL" id="DQ186393">
    <property type="protein sequence ID" value="ABA18978.1"/>
    <property type="molecule type" value="Genomic_DNA"/>
</dbReference>
<dbReference type="EMBL" id="DQ186394">
    <property type="protein sequence ID" value="ABA18979.1"/>
    <property type="molecule type" value="Genomic_DNA"/>
</dbReference>
<dbReference type="EMBL" id="DQ186395">
    <property type="protein sequence ID" value="ABA18980.1"/>
    <property type="molecule type" value="Genomic_DNA"/>
</dbReference>
<dbReference type="EMBL" id="DQ186396">
    <property type="protein sequence ID" value="ABA18981.1"/>
    <property type="molecule type" value="Genomic_DNA"/>
</dbReference>
<dbReference type="EMBL" id="DQ186397">
    <property type="protein sequence ID" value="ABA18982.1"/>
    <property type="molecule type" value="Genomic_DNA"/>
</dbReference>
<dbReference type="EMBL" id="DQ186398">
    <property type="protein sequence ID" value="ABA18983.1"/>
    <property type="molecule type" value="Genomic_DNA"/>
</dbReference>
<dbReference type="EMBL" id="DQ186399">
    <property type="protein sequence ID" value="ABA18984.1"/>
    <property type="molecule type" value="Genomic_DNA"/>
</dbReference>
<dbReference type="EMBL" id="DQ186400">
    <property type="protein sequence ID" value="ABA18985.1"/>
    <property type="molecule type" value="Genomic_DNA"/>
</dbReference>
<dbReference type="EMBL" id="DQ186401">
    <property type="protein sequence ID" value="ABA18986.1"/>
    <property type="molecule type" value="Genomic_DNA"/>
</dbReference>
<dbReference type="EMBL" id="DQ186402">
    <property type="protein sequence ID" value="ABA18987.1"/>
    <property type="molecule type" value="Genomic_DNA"/>
</dbReference>
<dbReference type="EMBL" id="DQ186403">
    <property type="protein sequence ID" value="ABA18988.1"/>
    <property type="molecule type" value="Genomic_DNA"/>
</dbReference>
<dbReference type="EMBL" id="DQ186404">
    <property type="protein sequence ID" value="ABA18989.1"/>
    <property type="molecule type" value="Genomic_DNA"/>
</dbReference>
<dbReference type="EMBL" id="DQ186405">
    <property type="protein sequence ID" value="ABA18990.1"/>
    <property type="molecule type" value="Genomic_DNA"/>
</dbReference>
<dbReference type="EMBL" id="DQ186406">
    <property type="protein sequence ID" value="ABA18991.1"/>
    <property type="molecule type" value="Genomic_DNA"/>
</dbReference>
<dbReference type="EMBL" id="DQ186407">
    <property type="protein sequence ID" value="ABA18992.1"/>
    <property type="molecule type" value="Genomic_DNA"/>
</dbReference>
<dbReference type="EMBL" id="DQ186408">
    <property type="protein sequence ID" value="ABA18993.1"/>
    <property type="molecule type" value="Genomic_DNA"/>
</dbReference>
<dbReference type="EMBL" id="DQ186409">
    <property type="protein sequence ID" value="ABA18994.1"/>
    <property type="molecule type" value="Genomic_DNA"/>
</dbReference>
<dbReference type="EMBL" id="DQ186410">
    <property type="protein sequence ID" value="ABA18995.1"/>
    <property type="molecule type" value="Genomic_DNA"/>
</dbReference>
<dbReference type="EMBL" id="DQ186411">
    <property type="protein sequence ID" value="ABA18996.1"/>
    <property type="molecule type" value="Genomic_DNA"/>
</dbReference>
<dbReference type="EMBL" id="DQ186412">
    <property type="protein sequence ID" value="ABA18997.1"/>
    <property type="molecule type" value="Genomic_DNA"/>
</dbReference>
<dbReference type="EMBL" id="DQ186413">
    <property type="protein sequence ID" value="ABA18998.1"/>
    <property type="molecule type" value="Genomic_DNA"/>
</dbReference>
<dbReference type="RefSeq" id="NP_001073277.1">
    <property type="nucleotide sequence ID" value="NM_001079809.1"/>
</dbReference>
<dbReference type="BioGRID" id="575963">
    <property type="interactions" value="1"/>
</dbReference>
<dbReference type="FunCoup" id="Q1AE95">
    <property type="interactions" value="17"/>
</dbReference>
<dbReference type="iPTMnet" id="Q1AE95"/>
<dbReference type="PhosphoSitePlus" id="Q1AE95"/>
<dbReference type="BioMuta" id="HGNC:33205"/>
<dbReference type="DMDM" id="121940655"/>
<dbReference type="jPOST" id="Q1AE95"/>
<dbReference type="MassIVE" id="Q1AE95"/>
<dbReference type="PeptideAtlas" id="Q1AE95"/>
<dbReference type="Pumba" id="Q1AE95"/>
<dbReference type="DNASU" id="653659"/>
<dbReference type="AGR" id="HGNC:33205"/>
<dbReference type="GeneCards" id="TMEM183BP"/>
<dbReference type="HGNC" id="HGNC:33205">
    <property type="gene designation" value="TMEM183BP"/>
</dbReference>
<dbReference type="MIM" id="611365">
    <property type="type" value="gene"/>
</dbReference>
<dbReference type="neXtProt" id="NX_Q1AE95"/>
<dbReference type="InParanoid" id="Q1AE95"/>
<dbReference type="PAN-GO" id="Q1AE95">
    <property type="GO annotations" value="2 GO annotations based on evolutionary models"/>
</dbReference>
<dbReference type="PhylomeDB" id="Q1AE95"/>
<dbReference type="PathwayCommons" id="Q1AE95"/>
<dbReference type="BioGRID-ORCS" id="653659">
    <property type="hits" value="10 hits in 183 CRISPR screens"/>
</dbReference>
<dbReference type="ChiTaRS" id="TMEM183B">
    <property type="organism name" value="human"/>
</dbReference>
<dbReference type="GenomeRNAi" id="653659"/>
<dbReference type="Pharos" id="Q1AE95">
    <property type="development level" value="Tdark"/>
</dbReference>
<dbReference type="PRO" id="PR:Q1AE95"/>
<dbReference type="Proteomes" id="UP000005640">
    <property type="component" value="Unplaced"/>
</dbReference>
<dbReference type="RNAct" id="Q1AE95">
    <property type="molecule type" value="protein"/>
</dbReference>
<dbReference type="GO" id="GO:0016020">
    <property type="term" value="C:membrane"/>
    <property type="evidence" value="ECO:0007669"/>
    <property type="project" value="UniProtKB-SubCell"/>
</dbReference>
<dbReference type="GO" id="GO:0019005">
    <property type="term" value="C:SCF ubiquitin ligase complex"/>
    <property type="evidence" value="ECO:0000318"/>
    <property type="project" value="GO_Central"/>
</dbReference>
<dbReference type="InterPro" id="IPR036047">
    <property type="entry name" value="F-box-like_dom_sf"/>
</dbReference>
<dbReference type="InterPro" id="IPR026509">
    <property type="entry name" value="TMEM183"/>
</dbReference>
<dbReference type="PANTHER" id="PTHR20988">
    <property type="entry name" value="TRANSMEMBRANE PROTEIN 183A-RELATED"/>
    <property type="match status" value="1"/>
</dbReference>
<dbReference type="PANTHER" id="PTHR20988:SF2">
    <property type="entry name" value="TRANSMEMBRANE PROTEIN 183A-RELATED"/>
    <property type="match status" value="1"/>
</dbReference>
<dbReference type="SUPFAM" id="SSF81383">
    <property type="entry name" value="F-box domain"/>
    <property type="match status" value="1"/>
</dbReference>
<accession>Q1AE95</accession>
<accession>Q1AE97</accession>
<comment type="subcellular location">
    <subcellularLocation>
        <location evidence="5">Membrane</location>
        <topology evidence="5">Single-pass membrane protein</topology>
    </subcellularLocation>
</comment>
<comment type="tissue specificity">
    <text evidence="3">Expressed in brain, lung, pancreas, thymus, intestine and blood. Not detected in heart, placenta, liver, muscle, kidney, spleen, prostate, testis, ovary and colon.</text>
</comment>
<comment type="miscellaneous">
    <text evidence="6">This gene was derived from TMEM183A through retroposition after the divergence of human and chimpanzee.</text>
</comment>
<comment type="similarity">
    <text evidence="5">Belongs to the TMEM183 family.</text>
</comment>
<comment type="caution">
    <text evidence="5">Could be the product of a pseudogene.</text>
</comment>
<evidence type="ECO:0000255" key="1"/>
<evidence type="ECO:0000256" key="2">
    <source>
        <dbReference type="SAM" id="MobiDB-lite"/>
    </source>
</evidence>
<evidence type="ECO:0000269" key="3">
    <source>
    </source>
</evidence>
<evidence type="ECO:0000303" key="4">
    <source>
    </source>
</evidence>
<evidence type="ECO:0000305" key="5"/>
<evidence type="ECO:0000305" key="6">
    <source>
    </source>
</evidence>
<evidence type="ECO:0000312" key="7">
    <source>
        <dbReference type="HGNC" id="HGNC:33205"/>
    </source>
</evidence>
<gene>
    <name evidence="7" type="primary">TMEM183BP</name>
    <name evidence="4" type="synonym">C1orf37-dup</name>
    <name evidence="7" type="synonym">TMEM183B</name>
</gene>
<proteinExistence type="uncertain"/>
<protein>
    <recommendedName>
        <fullName evidence="5">Putative transmembrane protein 183BP</fullName>
    </recommendedName>
    <alternativeName>
        <fullName evidence="7">Transmembrane protein 183B pseudogene</fullName>
    </alternativeName>
</protein>
<name>T183B_HUMAN</name>